<comment type="function">
    <text evidence="1">Catalyzes the addition and repair of the essential 3'-terminal CCA sequence in tRNAs without using a nucleic acid template. Adds these three nucleotides in the order of C, C, and A to the tRNA nucleotide-73, using CTP and ATP as substrates and producing inorganic pyrophosphate. tRNA 3'-terminal CCA addition is required both for tRNA processing and repair. Also involved in tRNA surveillance by mediating tandem CCA addition to generate a CCACCA at the 3' terminus of unstable tRNAs. While stable tRNAs receive only 3'-terminal CCA, unstable tRNAs are marked with CCACCA and rapidly degraded.</text>
</comment>
<comment type="catalytic activity">
    <reaction evidence="1">
        <text>a tRNA precursor + 2 CTP + ATP = a tRNA with a 3' CCA end + 3 diphosphate</text>
        <dbReference type="Rhea" id="RHEA:14433"/>
        <dbReference type="Rhea" id="RHEA-COMP:10465"/>
        <dbReference type="Rhea" id="RHEA-COMP:10468"/>
        <dbReference type="ChEBI" id="CHEBI:30616"/>
        <dbReference type="ChEBI" id="CHEBI:33019"/>
        <dbReference type="ChEBI" id="CHEBI:37563"/>
        <dbReference type="ChEBI" id="CHEBI:74896"/>
        <dbReference type="ChEBI" id="CHEBI:83071"/>
        <dbReference type="EC" id="2.7.7.72"/>
    </reaction>
</comment>
<comment type="catalytic activity">
    <reaction evidence="1">
        <text>a tRNA with a 3' CCA end + 2 CTP + ATP = a tRNA with a 3' CCACCA end + 3 diphosphate</text>
        <dbReference type="Rhea" id="RHEA:76235"/>
        <dbReference type="Rhea" id="RHEA-COMP:10468"/>
        <dbReference type="Rhea" id="RHEA-COMP:18655"/>
        <dbReference type="ChEBI" id="CHEBI:30616"/>
        <dbReference type="ChEBI" id="CHEBI:33019"/>
        <dbReference type="ChEBI" id="CHEBI:37563"/>
        <dbReference type="ChEBI" id="CHEBI:83071"/>
        <dbReference type="ChEBI" id="CHEBI:195187"/>
    </reaction>
    <physiologicalReaction direction="left-to-right" evidence="1">
        <dbReference type="Rhea" id="RHEA:76236"/>
    </physiologicalReaction>
</comment>
<comment type="cofactor">
    <cofactor evidence="1">
        <name>Mg(2+)</name>
        <dbReference type="ChEBI" id="CHEBI:18420"/>
    </cofactor>
    <text evidence="1">Magnesium is required for nucleotidyltransferase activity.</text>
</comment>
<comment type="cofactor">
    <cofactor evidence="1">
        <name>Ni(2+)</name>
        <dbReference type="ChEBI" id="CHEBI:49786"/>
    </cofactor>
    <text evidence="1">Nickel for phosphatase activity.</text>
</comment>
<comment type="subunit">
    <text evidence="1">Monomer. Can also form homodimers and oligomers.</text>
</comment>
<comment type="domain">
    <text evidence="1">Comprises two domains: an N-terminal domain containing the nucleotidyltransferase activity and a C-terminal HD domain associated with both phosphodiesterase and phosphatase activities.</text>
</comment>
<comment type="miscellaneous">
    <text evidence="1">A single active site specifically recognizes both ATP and CTP and is responsible for their addition.</text>
</comment>
<comment type="similarity">
    <text evidence="1">Belongs to the tRNA nucleotidyltransferase/poly(A) polymerase family. Bacterial CCA-adding enzyme type 1 subfamily.</text>
</comment>
<accession>A3M767</accession>
<feature type="chain" id="PRO_1000140019" description="Multifunctional CCA protein">
    <location>
        <begin position="1"/>
        <end position="412"/>
    </location>
</feature>
<feature type="domain" description="HD" evidence="1">
    <location>
        <begin position="228"/>
        <end position="329"/>
    </location>
</feature>
<feature type="binding site" evidence="1">
    <location>
        <position position="8"/>
    </location>
    <ligand>
        <name>ATP</name>
        <dbReference type="ChEBI" id="CHEBI:30616"/>
    </ligand>
</feature>
<feature type="binding site" evidence="1">
    <location>
        <position position="8"/>
    </location>
    <ligand>
        <name>CTP</name>
        <dbReference type="ChEBI" id="CHEBI:37563"/>
    </ligand>
</feature>
<feature type="binding site" evidence="1">
    <location>
        <position position="11"/>
    </location>
    <ligand>
        <name>ATP</name>
        <dbReference type="ChEBI" id="CHEBI:30616"/>
    </ligand>
</feature>
<feature type="binding site" evidence="1">
    <location>
        <position position="11"/>
    </location>
    <ligand>
        <name>CTP</name>
        <dbReference type="ChEBI" id="CHEBI:37563"/>
    </ligand>
</feature>
<feature type="binding site" evidence="1">
    <location>
        <position position="21"/>
    </location>
    <ligand>
        <name>Mg(2+)</name>
        <dbReference type="ChEBI" id="CHEBI:18420"/>
    </ligand>
</feature>
<feature type="binding site" evidence="1">
    <location>
        <position position="23"/>
    </location>
    <ligand>
        <name>Mg(2+)</name>
        <dbReference type="ChEBI" id="CHEBI:18420"/>
    </ligand>
</feature>
<feature type="binding site" evidence="1">
    <location>
        <position position="91"/>
    </location>
    <ligand>
        <name>ATP</name>
        <dbReference type="ChEBI" id="CHEBI:30616"/>
    </ligand>
</feature>
<feature type="binding site" evidence="1">
    <location>
        <position position="91"/>
    </location>
    <ligand>
        <name>CTP</name>
        <dbReference type="ChEBI" id="CHEBI:37563"/>
    </ligand>
</feature>
<feature type="binding site" evidence="1">
    <location>
        <position position="137"/>
    </location>
    <ligand>
        <name>ATP</name>
        <dbReference type="ChEBI" id="CHEBI:30616"/>
    </ligand>
</feature>
<feature type="binding site" evidence="1">
    <location>
        <position position="137"/>
    </location>
    <ligand>
        <name>CTP</name>
        <dbReference type="ChEBI" id="CHEBI:37563"/>
    </ligand>
</feature>
<feature type="binding site" evidence="1">
    <location>
        <position position="140"/>
    </location>
    <ligand>
        <name>ATP</name>
        <dbReference type="ChEBI" id="CHEBI:30616"/>
    </ligand>
</feature>
<feature type="binding site" evidence="1">
    <location>
        <position position="140"/>
    </location>
    <ligand>
        <name>CTP</name>
        <dbReference type="ChEBI" id="CHEBI:37563"/>
    </ligand>
</feature>
<protein>
    <recommendedName>
        <fullName evidence="1">Multifunctional CCA protein</fullName>
    </recommendedName>
    <domain>
        <recommendedName>
            <fullName evidence="1">CCA-adding enzyme</fullName>
            <ecNumber evidence="1">2.7.7.72</ecNumber>
        </recommendedName>
        <alternativeName>
            <fullName evidence="1">CCA tRNA nucleotidyltransferase</fullName>
        </alternativeName>
        <alternativeName>
            <fullName evidence="1">tRNA CCA-pyrophosphorylase</fullName>
        </alternativeName>
        <alternativeName>
            <fullName evidence="1">tRNA adenylyl-/cytidylyl-transferase</fullName>
        </alternativeName>
        <alternativeName>
            <fullName evidence="1">tRNA nucleotidyltransferase</fullName>
        </alternativeName>
        <alternativeName>
            <fullName evidence="1">tRNA-NT</fullName>
        </alternativeName>
    </domain>
    <domain>
        <recommendedName>
            <fullName evidence="1">2'-nucleotidase</fullName>
            <ecNumber evidence="1">3.1.3.-</ecNumber>
        </recommendedName>
    </domain>
    <domain>
        <recommendedName>
            <fullName evidence="1">2',3'-cyclic phosphodiesterase</fullName>
            <ecNumber evidence="1">3.1.4.-</ecNumber>
        </recommendedName>
    </domain>
    <domain>
        <recommendedName>
            <fullName evidence="1">Phosphatase</fullName>
            <ecNumber evidence="1">3.1.3.-</ecNumber>
        </recommendedName>
    </domain>
</protein>
<organism>
    <name type="scientific">Acinetobacter baumannii (strain ATCC 17978 / DSM 105126 / CIP 53.77 / LMG 1025 / NCDC KC755 / 5377)</name>
    <dbReference type="NCBI Taxonomy" id="400667"/>
    <lineage>
        <taxon>Bacteria</taxon>
        <taxon>Pseudomonadati</taxon>
        <taxon>Pseudomonadota</taxon>
        <taxon>Gammaproteobacteria</taxon>
        <taxon>Moraxellales</taxon>
        <taxon>Moraxellaceae</taxon>
        <taxon>Acinetobacter</taxon>
        <taxon>Acinetobacter calcoaceticus/baumannii complex</taxon>
    </lineage>
</organism>
<proteinExistence type="inferred from homology"/>
<evidence type="ECO:0000255" key="1">
    <source>
        <dbReference type="HAMAP-Rule" id="MF_01261"/>
    </source>
</evidence>
<reference key="1">
    <citation type="journal article" date="2007" name="Genes Dev.">
        <title>New insights into Acinetobacter baumannii pathogenesis revealed by high-density pyrosequencing and transposon mutagenesis.</title>
        <authorList>
            <person name="Smith M.G."/>
            <person name="Gianoulis T.A."/>
            <person name="Pukatzki S."/>
            <person name="Mekalanos J.J."/>
            <person name="Ornston L.N."/>
            <person name="Gerstein M."/>
            <person name="Snyder M."/>
        </authorList>
    </citation>
    <scope>NUCLEOTIDE SEQUENCE [LARGE SCALE GENOMIC DNA]</scope>
    <source>
        <strain>ATCC 17978 / DSM 105126 / CIP 53.77 / LMG 1025 / NCDC KC755 / 5377</strain>
    </source>
</reference>
<gene>
    <name evidence="1" type="primary">cca</name>
    <name type="ordered locus">A1S_2339</name>
</gene>
<name>CCA_ACIBT</name>
<dbReference type="EC" id="2.7.7.72" evidence="1"/>
<dbReference type="EC" id="3.1.3.-" evidence="1"/>
<dbReference type="EC" id="3.1.4.-" evidence="1"/>
<dbReference type="EMBL" id="CP000521">
    <property type="protein sequence ID" value="ABO12761.2"/>
    <property type="molecule type" value="Genomic_DNA"/>
</dbReference>
<dbReference type="RefSeq" id="WP_001198542.1">
    <property type="nucleotide sequence ID" value="NZ_CACVBA010000001.1"/>
</dbReference>
<dbReference type="SMR" id="A3M767"/>
<dbReference type="KEGG" id="acb:A1S_2339"/>
<dbReference type="HOGENOM" id="CLU_015961_1_1_6"/>
<dbReference type="GO" id="GO:0005524">
    <property type="term" value="F:ATP binding"/>
    <property type="evidence" value="ECO:0007669"/>
    <property type="project" value="UniProtKB-UniRule"/>
</dbReference>
<dbReference type="GO" id="GO:0004810">
    <property type="term" value="F:CCA tRNA nucleotidyltransferase activity"/>
    <property type="evidence" value="ECO:0007669"/>
    <property type="project" value="UniProtKB-UniRule"/>
</dbReference>
<dbReference type="GO" id="GO:0004112">
    <property type="term" value="F:cyclic-nucleotide phosphodiesterase activity"/>
    <property type="evidence" value="ECO:0007669"/>
    <property type="project" value="UniProtKB-UniRule"/>
</dbReference>
<dbReference type="GO" id="GO:0000287">
    <property type="term" value="F:magnesium ion binding"/>
    <property type="evidence" value="ECO:0007669"/>
    <property type="project" value="UniProtKB-UniRule"/>
</dbReference>
<dbReference type="GO" id="GO:0016791">
    <property type="term" value="F:phosphatase activity"/>
    <property type="evidence" value="ECO:0007669"/>
    <property type="project" value="UniProtKB-UniRule"/>
</dbReference>
<dbReference type="GO" id="GO:0000049">
    <property type="term" value="F:tRNA binding"/>
    <property type="evidence" value="ECO:0007669"/>
    <property type="project" value="UniProtKB-UniRule"/>
</dbReference>
<dbReference type="GO" id="GO:0042245">
    <property type="term" value="P:RNA repair"/>
    <property type="evidence" value="ECO:0007669"/>
    <property type="project" value="UniProtKB-KW"/>
</dbReference>
<dbReference type="GO" id="GO:0001680">
    <property type="term" value="P:tRNA 3'-terminal CCA addition"/>
    <property type="evidence" value="ECO:0007669"/>
    <property type="project" value="UniProtKB-UniRule"/>
</dbReference>
<dbReference type="CDD" id="cd00077">
    <property type="entry name" value="HDc"/>
    <property type="match status" value="1"/>
</dbReference>
<dbReference type="CDD" id="cd05398">
    <property type="entry name" value="NT_ClassII-CCAase"/>
    <property type="match status" value="1"/>
</dbReference>
<dbReference type="Gene3D" id="3.30.460.10">
    <property type="entry name" value="Beta Polymerase, domain 2"/>
    <property type="match status" value="1"/>
</dbReference>
<dbReference type="Gene3D" id="1.10.3090.10">
    <property type="entry name" value="cca-adding enzyme, domain 2"/>
    <property type="match status" value="1"/>
</dbReference>
<dbReference type="HAMAP" id="MF_01261">
    <property type="entry name" value="CCA_bact_type1"/>
    <property type="match status" value="1"/>
</dbReference>
<dbReference type="HAMAP" id="MF_01262">
    <property type="entry name" value="CCA_bact_type2"/>
    <property type="match status" value="1"/>
</dbReference>
<dbReference type="InterPro" id="IPR012006">
    <property type="entry name" value="CCA_bact"/>
</dbReference>
<dbReference type="InterPro" id="IPR003607">
    <property type="entry name" value="HD/PDEase_dom"/>
</dbReference>
<dbReference type="InterPro" id="IPR006674">
    <property type="entry name" value="HD_domain"/>
</dbReference>
<dbReference type="InterPro" id="IPR043519">
    <property type="entry name" value="NT_sf"/>
</dbReference>
<dbReference type="InterPro" id="IPR002646">
    <property type="entry name" value="PolA_pol_head_dom"/>
</dbReference>
<dbReference type="InterPro" id="IPR032828">
    <property type="entry name" value="PolyA_RNA-bd"/>
</dbReference>
<dbReference type="InterPro" id="IPR050124">
    <property type="entry name" value="tRNA_CCA-adding_enzyme"/>
</dbReference>
<dbReference type="NCBIfam" id="NF008137">
    <property type="entry name" value="PRK10885.1"/>
    <property type="match status" value="1"/>
</dbReference>
<dbReference type="PANTHER" id="PTHR47545">
    <property type="entry name" value="MULTIFUNCTIONAL CCA PROTEIN"/>
    <property type="match status" value="1"/>
</dbReference>
<dbReference type="PANTHER" id="PTHR47545:SF1">
    <property type="entry name" value="MULTIFUNCTIONAL CCA PROTEIN"/>
    <property type="match status" value="1"/>
</dbReference>
<dbReference type="Pfam" id="PF01966">
    <property type="entry name" value="HD"/>
    <property type="match status" value="1"/>
</dbReference>
<dbReference type="Pfam" id="PF01743">
    <property type="entry name" value="PolyA_pol"/>
    <property type="match status" value="1"/>
</dbReference>
<dbReference type="Pfam" id="PF12627">
    <property type="entry name" value="PolyA_pol_RNAbd"/>
    <property type="match status" value="1"/>
</dbReference>
<dbReference type="PIRSF" id="PIRSF000813">
    <property type="entry name" value="CCA_bact"/>
    <property type="match status" value="1"/>
</dbReference>
<dbReference type="SUPFAM" id="SSF81301">
    <property type="entry name" value="Nucleotidyltransferase"/>
    <property type="match status" value="1"/>
</dbReference>
<dbReference type="SUPFAM" id="SSF81891">
    <property type="entry name" value="Poly A polymerase C-terminal region-like"/>
    <property type="match status" value="1"/>
</dbReference>
<dbReference type="PROSITE" id="PS51831">
    <property type="entry name" value="HD"/>
    <property type="match status" value="1"/>
</dbReference>
<sequence>MQVYLVGGAVRDYLLGHPYQEKDYVVVGATPEHMLAQGFQPVGKDFPVFLHPETKEEYALARTERKSGQGYHGFQFFTDTTVSLEDDLIRRDLTINAIAMDQDGKIYDPYGGQNDLENKILRHVSEAFAEDPLRVLRVARFAARYFPYGFQIAPETLQLMQTMADSGELDALTPERVWKETSRALMENHADIYFQTLRNCGALKHLFPEIDALFGVPQRPEYHPEVDCGIHTLMSLQQACKSNYSLDVRFAVLVHDLGKALTPAEELPRHIMHEERGIKPVTQLCERLRVPTQTKQLALSVCKEHLKCHQIMSLKPGTLWRLLQRLDVLRRPERVEAFVQACECDAKGRLGLEDRPYPQAQYMREAMQIVRSIKVQDLPENIKGAEIGEMLIQYRIEALAEFKNQHQSLSHS</sequence>
<keyword id="KW-0067">ATP-binding</keyword>
<keyword id="KW-0378">Hydrolase</keyword>
<keyword id="KW-0460">Magnesium</keyword>
<keyword id="KW-0479">Metal-binding</keyword>
<keyword id="KW-0511">Multifunctional enzyme</keyword>
<keyword id="KW-0533">Nickel</keyword>
<keyword id="KW-0547">Nucleotide-binding</keyword>
<keyword id="KW-0548">Nucleotidyltransferase</keyword>
<keyword id="KW-0692">RNA repair</keyword>
<keyword id="KW-0694">RNA-binding</keyword>
<keyword id="KW-0808">Transferase</keyword>
<keyword id="KW-0819">tRNA processing</keyword>